<reference key="1">
    <citation type="journal article" date="1995" name="Science">
        <title>Whole-genome random sequencing and assembly of Haemophilus influenzae Rd.</title>
        <authorList>
            <person name="Fleischmann R.D."/>
            <person name="Adams M.D."/>
            <person name="White O."/>
            <person name="Clayton R.A."/>
            <person name="Kirkness E.F."/>
            <person name="Kerlavage A.R."/>
            <person name="Bult C.J."/>
            <person name="Tomb J.-F."/>
            <person name="Dougherty B.A."/>
            <person name="Merrick J.M."/>
            <person name="McKenney K."/>
            <person name="Sutton G.G."/>
            <person name="FitzHugh W."/>
            <person name="Fields C.A."/>
            <person name="Gocayne J.D."/>
            <person name="Scott J.D."/>
            <person name="Shirley R."/>
            <person name="Liu L.-I."/>
            <person name="Glodek A."/>
            <person name="Kelley J.M."/>
            <person name="Weidman J.F."/>
            <person name="Phillips C.A."/>
            <person name="Spriggs T."/>
            <person name="Hedblom E."/>
            <person name="Cotton M.D."/>
            <person name="Utterback T.R."/>
            <person name="Hanna M.C."/>
            <person name="Nguyen D.T."/>
            <person name="Saudek D.M."/>
            <person name="Brandon R.C."/>
            <person name="Fine L.D."/>
            <person name="Fritchman J.L."/>
            <person name="Fuhrmann J.L."/>
            <person name="Geoghagen N.S.M."/>
            <person name="Gnehm C.L."/>
            <person name="McDonald L.A."/>
            <person name="Small K.V."/>
            <person name="Fraser C.M."/>
            <person name="Smith H.O."/>
            <person name="Venter J.C."/>
        </authorList>
    </citation>
    <scope>NUCLEOTIDE SEQUENCE [LARGE SCALE GENOMIC DNA]</scope>
    <source>
        <strain>ATCC 51907 / DSM 11121 / KW20 / Rd</strain>
    </source>
</reference>
<protein>
    <recommendedName>
        <fullName>Uncharacterized protein HI_0389</fullName>
    </recommendedName>
</protein>
<accession>P43991</accession>
<comment type="subcellular location">
    <subcellularLocation>
        <location evidence="2">Membrane</location>
        <topology evidence="2">Single-pass membrane protein</topology>
    </subcellularLocation>
</comment>
<sequence>MKGKITLFFTALCFGLTGCIAPPKGLEKERFSINSYREISPQDLTCHCKTVRLGGKIVNTTVLANQTKIEVLSLPVSSISAKPFVELQSDGRFIVYFNGFVEPENLKERYITVGGQLAGTEKGKIEQADYTYPVVQADKYRIWTLSTTYDYPTDDWDEDDDWGFFRWRHRLWYVQPEIHYYLN</sequence>
<gene>
    <name type="ordered locus">HI_0389</name>
</gene>
<proteinExistence type="predicted"/>
<dbReference type="EMBL" id="L42023">
    <property type="protein sequence ID" value="AAC22047.1"/>
    <property type="molecule type" value="Genomic_DNA"/>
</dbReference>
<dbReference type="PIR" id="I64006">
    <property type="entry name" value="I64006"/>
</dbReference>
<dbReference type="RefSeq" id="NP_438550.1">
    <property type="nucleotide sequence ID" value="NC_000907.1"/>
</dbReference>
<dbReference type="STRING" id="71421.HI_0389"/>
<dbReference type="EnsemblBacteria" id="AAC22047">
    <property type="protein sequence ID" value="AAC22047"/>
    <property type="gene ID" value="HI_0389"/>
</dbReference>
<dbReference type="KEGG" id="hin:HI_0389"/>
<dbReference type="PATRIC" id="fig|71421.8.peg.407"/>
<dbReference type="eggNOG" id="COG3065">
    <property type="taxonomic scope" value="Bacteria"/>
</dbReference>
<dbReference type="HOGENOM" id="CLU_100924_0_1_6"/>
<dbReference type="OrthoDB" id="5295757at2"/>
<dbReference type="PhylomeDB" id="P43991"/>
<dbReference type="BioCyc" id="HINF71421:G1GJ1-404-MONOMER"/>
<dbReference type="Proteomes" id="UP000000579">
    <property type="component" value="Chromosome"/>
</dbReference>
<dbReference type="GO" id="GO:0019867">
    <property type="term" value="C:outer membrane"/>
    <property type="evidence" value="ECO:0000318"/>
    <property type="project" value="GO_Central"/>
</dbReference>
<dbReference type="InterPro" id="IPR004658">
    <property type="entry name" value="OMP_Slp"/>
</dbReference>
<dbReference type="NCBIfam" id="TIGR00752">
    <property type="entry name" value="slp"/>
    <property type="match status" value="1"/>
</dbReference>
<dbReference type="PANTHER" id="PTHR37530">
    <property type="entry name" value="OUTER MEMBRANE PROTEIN SLP"/>
    <property type="match status" value="1"/>
</dbReference>
<dbReference type="PANTHER" id="PTHR37530:SF1">
    <property type="entry name" value="OUTER MEMBRANE PROTEIN SLP"/>
    <property type="match status" value="1"/>
</dbReference>
<dbReference type="Pfam" id="PF03843">
    <property type="entry name" value="Slp"/>
    <property type="match status" value="1"/>
</dbReference>
<dbReference type="PIRSF" id="PIRSF004982">
    <property type="entry name" value="SlP"/>
    <property type="match status" value="1"/>
</dbReference>
<dbReference type="PROSITE" id="PS51257">
    <property type="entry name" value="PROKAR_LIPOPROTEIN"/>
    <property type="match status" value="1"/>
</dbReference>
<organism>
    <name type="scientific">Haemophilus influenzae (strain ATCC 51907 / DSM 11121 / KW20 / Rd)</name>
    <dbReference type="NCBI Taxonomy" id="71421"/>
    <lineage>
        <taxon>Bacteria</taxon>
        <taxon>Pseudomonadati</taxon>
        <taxon>Pseudomonadota</taxon>
        <taxon>Gammaproteobacteria</taxon>
        <taxon>Pasteurellales</taxon>
        <taxon>Pasteurellaceae</taxon>
        <taxon>Haemophilus</taxon>
    </lineage>
</organism>
<evidence type="ECO:0000255" key="1"/>
<evidence type="ECO:0000305" key="2"/>
<name>Y389_HAEIN</name>
<feature type="chain" id="PRO_0000077917" description="Uncharacterized protein HI_0389">
    <location>
        <begin position="1"/>
        <end position="183"/>
    </location>
</feature>
<feature type="transmembrane region" description="Helical" evidence="1">
    <location>
        <begin position="7"/>
        <end position="23"/>
    </location>
</feature>
<keyword id="KW-0472">Membrane</keyword>
<keyword id="KW-1185">Reference proteome</keyword>
<keyword id="KW-0812">Transmembrane</keyword>
<keyword id="KW-1133">Transmembrane helix</keyword>